<evidence type="ECO:0000256" key="1">
    <source>
        <dbReference type="SAM" id="MobiDB-lite"/>
    </source>
</evidence>
<organismHost>
    <name type="scientific">Escherichia coli</name>
    <dbReference type="NCBI Taxonomy" id="562"/>
</organismHost>
<organism>
    <name type="scientific">Enterobacteria phage T4</name>
    <name type="common">Bacteriophage T4</name>
    <dbReference type="NCBI Taxonomy" id="10665"/>
    <lineage>
        <taxon>Viruses</taxon>
        <taxon>Duplodnaviria</taxon>
        <taxon>Heunggongvirae</taxon>
        <taxon>Uroviricota</taxon>
        <taxon>Caudoviricetes</taxon>
        <taxon>Straboviridae</taxon>
        <taxon>Tevenvirinae</taxon>
        <taxon>Tequatrovirus</taxon>
    </lineage>
</organism>
<dbReference type="EMBL" id="J04978">
    <property type="protein sequence ID" value="AAA32524.1"/>
    <property type="molecule type" value="Genomic_DNA"/>
</dbReference>
<dbReference type="EMBL" id="AF158101">
    <property type="protein sequence ID" value="AAD42465.1"/>
    <property type="molecule type" value="Genomic_DNA"/>
</dbReference>
<dbReference type="PIR" id="B44782">
    <property type="entry name" value="B44782"/>
</dbReference>
<dbReference type="RefSeq" id="NP_049655.1">
    <property type="nucleotide sequence ID" value="NC_000866.4"/>
</dbReference>
<dbReference type="GeneID" id="1258725"/>
<dbReference type="KEGG" id="vg:1258725"/>
<dbReference type="OrthoDB" id="20005at10239"/>
<dbReference type="Proteomes" id="UP000009087">
    <property type="component" value="Segment"/>
</dbReference>
<dbReference type="InterPro" id="IPR021049">
    <property type="entry name" value="Phage_T4_Gp40"/>
</dbReference>
<dbReference type="Pfam" id="PF11113">
    <property type="entry name" value="Phage_head_chap"/>
    <property type="match status" value="1"/>
</dbReference>
<accession>P17171</accession>
<feature type="chain" id="PRO_0000165037" description="Head formation protein">
    <location>
        <begin position="1"/>
        <end position="114"/>
    </location>
</feature>
<feature type="region of interest" description="Disordered" evidence="1">
    <location>
        <begin position="1"/>
        <end position="26"/>
    </location>
</feature>
<feature type="compositionally biased region" description="Acidic residues" evidence="1">
    <location>
        <begin position="1"/>
        <end position="14"/>
    </location>
</feature>
<name>VG40_BPT4</name>
<sequence length="114" mass="13290">MNKDDLDLDLEIIDESPSSEGEEERKERLFNESLKIIKSAMENVIQEIVIKLEDGSTHIVYVTKLDWVDGKVVMDFAVLDQERKAELAPHVEKCITMQLQDAFNKRSKKKFKFF</sequence>
<reference key="1">
    <citation type="journal article" date="1989" name="J. Biol. Chem.">
        <title>Altered expression of the bacteriophage T4 gene 41 (primase-helicase) in an Escherichia coli rho mutant.</title>
        <authorList>
            <person name="Hinton D.M."/>
        </authorList>
    </citation>
    <scope>NUCLEOTIDE SEQUENCE [GENOMIC DNA]</scope>
    <scope>PROTEIN SEQUENCE OF 1-20</scope>
</reference>
<reference key="2">
    <citation type="journal article" date="2003" name="Microbiol. Mol. Biol. Rev.">
        <title>Bacteriophage T4 genome.</title>
        <authorList>
            <person name="Miller E.S."/>
            <person name="Kutter E."/>
            <person name="Mosig G."/>
            <person name="Arisaka F."/>
            <person name="Kunisawa T."/>
            <person name="Ruger W."/>
        </authorList>
    </citation>
    <scope>NUCLEOTIDE SEQUENCE [LARGE SCALE GENOMIC DNA]</scope>
</reference>
<keyword id="KW-0903">Direct protein sequencing</keyword>
<keyword id="KW-1185">Reference proteome</keyword>
<gene>
    <name type="primary">40</name>
    <name type="synonym">sp</name>
</gene>
<protein>
    <recommendedName>
        <fullName>Head formation protein</fullName>
    </recommendedName>
    <alternativeName>
        <fullName>Protein Gp40</fullName>
    </alternativeName>
    <alternativeName>
        <fullName>Protein sp</fullName>
    </alternativeName>
</protein>
<comment type="function">
    <text>Helps head vertex assembly.</text>
</comment>
<proteinExistence type="evidence at protein level"/>